<accession>Q04897</accession>
<accession>A0A1S0T0B3</accession>
<name>YM98_YEAST</name>
<reference key="1">
    <citation type="journal article" date="1997" name="Nature">
        <title>The nucleotide sequence of Saccharomyces cerevisiae chromosome XIII.</title>
        <authorList>
            <person name="Bowman S."/>
            <person name="Churcher C.M."/>
            <person name="Badcock K."/>
            <person name="Brown D."/>
            <person name="Chillingworth T."/>
            <person name="Connor R."/>
            <person name="Dedman K."/>
            <person name="Devlin K."/>
            <person name="Gentles S."/>
            <person name="Hamlin N."/>
            <person name="Hunt S."/>
            <person name="Jagels K."/>
            <person name="Lye G."/>
            <person name="Moule S."/>
            <person name="Odell C."/>
            <person name="Pearson D."/>
            <person name="Rajandream M.A."/>
            <person name="Rice P."/>
            <person name="Skelton J."/>
            <person name="Walsh S.V."/>
            <person name="Whitehead S."/>
            <person name="Barrell B.G."/>
        </authorList>
    </citation>
    <scope>NUCLEOTIDE SEQUENCE [LARGE SCALE GENOMIC DNA]</scope>
    <source>
        <strain>ATCC 204508 / S288c</strain>
    </source>
</reference>
<reference key="2">
    <citation type="journal article" date="2014" name="G3 (Bethesda)">
        <title>The reference genome sequence of Saccharomyces cerevisiae: Then and now.</title>
        <authorList>
            <person name="Engel S.R."/>
            <person name="Dietrich F.S."/>
            <person name="Fisk D.G."/>
            <person name="Binkley G."/>
            <person name="Balakrishnan R."/>
            <person name="Costanzo M.C."/>
            <person name="Dwight S.S."/>
            <person name="Hitz B.C."/>
            <person name="Karra K."/>
            <person name="Nash R.S."/>
            <person name="Weng S."/>
            <person name="Wong E.D."/>
            <person name="Lloyd P."/>
            <person name="Skrzypek M.S."/>
            <person name="Miyasato S.R."/>
            <person name="Simison M."/>
            <person name="Cherry J.M."/>
        </authorList>
    </citation>
    <scope>GENOME REANNOTATION</scope>
    <source>
        <strain>ATCC 204508 / S288c</strain>
    </source>
</reference>
<feature type="chain" id="PRO_0000203360" description="Uncharacterized protein YMR320W">
    <location>
        <begin position="1"/>
        <end position="101"/>
    </location>
</feature>
<proteinExistence type="predicted"/>
<sequence>MRRFGKPCIVSHEISARPHILQPCNYKMVLSCKVKKPIELLHLQELILYTFMKICLHVNLIQQNINKLSYISRKYPRAPAFISCDNRATEPTKKGFLVCRM</sequence>
<organism>
    <name type="scientific">Saccharomyces cerevisiae (strain ATCC 204508 / S288c)</name>
    <name type="common">Baker's yeast</name>
    <dbReference type="NCBI Taxonomy" id="559292"/>
    <lineage>
        <taxon>Eukaryota</taxon>
        <taxon>Fungi</taxon>
        <taxon>Dikarya</taxon>
        <taxon>Ascomycota</taxon>
        <taxon>Saccharomycotina</taxon>
        <taxon>Saccharomycetes</taxon>
        <taxon>Saccharomycetales</taxon>
        <taxon>Saccharomycetaceae</taxon>
        <taxon>Saccharomyces</taxon>
    </lineage>
</organism>
<keyword id="KW-1185">Reference proteome</keyword>
<dbReference type="EMBL" id="Z54141">
    <property type="protein sequence ID" value="CAA90838.1"/>
    <property type="molecule type" value="Genomic_DNA"/>
</dbReference>
<dbReference type="EMBL" id="BK006946">
    <property type="protein sequence ID" value="DAA80330.1"/>
    <property type="molecule type" value="Genomic_DNA"/>
</dbReference>
<dbReference type="PIR" id="S69878">
    <property type="entry name" value="S69878"/>
</dbReference>
<dbReference type="RefSeq" id="NP_001335810.1">
    <property type="nucleotide sequence ID" value="NM_001348871.1"/>
</dbReference>
<dbReference type="FunCoup" id="Q04897">
    <property type="interactions" value="28"/>
</dbReference>
<dbReference type="STRING" id="4932.YMR320W"/>
<dbReference type="PaxDb" id="4932-YMR320W"/>
<dbReference type="EnsemblFungi" id="YMR320W_mRNA">
    <property type="protein sequence ID" value="YMR320W"/>
    <property type="gene ID" value="YMR320W"/>
</dbReference>
<dbReference type="GeneID" id="855370"/>
<dbReference type="AGR" id="SGD:S000004939"/>
<dbReference type="SGD" id="S000004939">
    <property type="gene designation" value="YMR320W"/>
</dbReference>
<dbReference type="HOGENOM" id="CLU_2293878_0_0_1"/>
<dbReference type="InParanoid" id="Q04897"/>
<dbReference type="PRO" id="PR:Q04897"/>
<dbReference type="Proteomes" id="UP000002311">
    <property type="component" value="Chromosome XIII"/>
</dbReference>
<dbReference type="RNAct" id="Q04897">
    <property type="molecule type" value="protein"/>
</dbReference>
<protein>
    <recommendedName>
        <fullName>Uncharacterized protein YMR320W</fullName>
    </recommendedName>
</protein>
<gene>
    <name type="ordered locus">YMR320W</name>
    <name type="ORF">YM9924.12</name>
</gene>